<gene>
    <name evidence="1" type="primary">katG</name>
    <name type="ordered locus">gll2771</name>
</gene>
<dbReference type="EC" id="1.11.1.21" evidence="1"/>
<dbReference type="EMBL" id="BA000045">
    <property type="protein sequence ID" value="BAC90712.1"/>
    <property type="molecule type" value="Genomic_DNA"/>
</dbReference>
<dbReference type="RefSeq" id="NP_925717.1">
    <property type="nucleotide sequence ID" value="NC_005125.1"/>
</dbReference>
<dbReference type="RefSeq" id="WP_011142765.1">
    <property type="nucleotide sequence ID" value="NC_005125.1"/>
</dbReference>
<dbReference type="SMR" id="Q7NGW6"/>
<dbReference type="FunCoup" id="Q7NGW6">
    <property type="interactions" value="6"/>
</dbReference>
<dbReference type="STRING" id="251221.gene:10760274"/>
<dbReference type="PeroxiBase" id="2378">
    <property type="entry name" value="GviCP01_PCC7421"/>
</dbReference>
<dbReference type="EnsemblBacteria" id="BAC90712">
    <property type="protein sequence ID" value="BAC90712"/>
    <property type="gene ID" value="BAC90712"/>
</dbReference>
<dbReference type="KEGG" id="gvi:gll2771"/>
<dbReference type="PATRIC" id="fig|251221.4.peg.2799"/>
<dbReference type="eggNOG" id="COG0376">
    <property type="taxonomic scope" value="Bacteria"/>
</dbReference>
<dbReference type="HOGENOM" id="CLU_025424_2_0_3"/>
<dbReference type="InParanoid" id="Q7NGW6"/>
<dbReference type="OrthoDB" id="9759743at2"/>
<dbReference type="PhylomeDB" id="Q7NGW6"/>
<dbReference type="Proteomes" id="UP000000557">
    <property type="component" value="Chromosome"/>
</dbReference>
<dbReference type="GO" id="GO:0005829">
    <property type="term" value="C:cytosol"/>
    <property type="evidence" value="ECO:0000318"/>
    <property type="project" value="GO_Central"/>
</dbReference>
<dbReference type="GO" id="GO:0004096">
    <property type="term" value="F:catalase activity"/>
    <property type="evidence" value="ECO:0000318"/>
    <property type="project" value="GO_Central"/>
</dbReference>
<dbReference type="GO" id="GO:0020037">
    <property type="term" value="F:heme binding"/>
    <property type="evidence" value="ECO:0000318"/>
    <property type="project" value="GO_Central"/>
</dbReference>
<dbReference type="GO" id="GO:0046872">
    <property type="term" value="F:metal ion binding"/>
    <property type="evidence" value="ECO:0007669"/>
    <property type="project" value="UniProtKB-KW"/>
</dbReference>
<dbReference type="GO" id="GO:0070301">
    <property type="term" value="P:cellular response to hydrogen peroxide"/>
    <property type="evidence" value="ECO:0000318"/>
    <property type="project" value="GO_Central"/>
</dbReference>
<dbReference type="GO" id="GO:0042744">
    <property type="term" value="P:hydrogen peroxide catabolic process"/>
    <property type="evidence" value="ECO:0000318"/>
    <property type="project" value="GO_Central"/>
</dbReference>
<dbReference type="CDD" id="cd00649">
    <property type="entry name" value="catalase_peroxidase_1"/>
    <property type="match status" value="1"/>
</dbReference>
<dbReference type="CDD" id="cd08200">
    <property type="entry name" value="catalase_peroxidase_2"/>
    <property type="match status" value="1"/>
</dbReference>
<dbReference type="FunFam" id="1.10.420.10:FF:000002">
    <property type="entry name" value="Catalase-peroxidase"/>
    <property type="match status" value="1"/>
</dbReference>
<dbReference type="FunFam" id="1.10.420.10:FF:000004">
    <property type="entry name" value="Catalase-peroxidase"/>
    <property type="match status" value="1"/>
</dbReference>
<dbReference type="FunFam" id="1.10.520.10:FF:000002">
    <property type="entry name" value="Catalase-peroxidase"/>
    <property type="match status" value="1"/>
</dbReference>
<dbReference type="Gene3D" id="1.10.520.10">
    <property type="match status" value="2"/>
</dbReference>
<dbReference type="Gene3D" id="1.10.420.10">
    <property type="entry name" value="Peroxidase, domain 2"/>
    <property type="match status" value="2"/>
</dbReference>
<dbReference type="HAMAP" id="MF_01961">
    <property type="entry name" value="Catal_peroxid"/>
    <property type="match status" value="1"/>
</dbReference>
<dbReference type="InterPro" id="IPR000763">
    <property type="entry name" value="Catalase_peroxidase"/>
</dbReference>
<dbReference type="InterPro" id="IPR002016">
    <property type="entry name" value="Haem_peroxidase"/>
</dbReference>
<dbReference type="InterPro" id="IPR010255">
    <property type="entry name" value="Haem_peroxidase_sf"/>
</dbReference>
<dbReference type="InterPro" id="IPR019794">
    <property type="entry name" value="Peroxidases_AS"/>
</dbReference>
<dbReference type="InterPro" id="IPR019793">
    <property type="entry name" value="Peroxidases_heam-ligand_BS"/>
</dbReference>
<dbReference type="NCBIfam" id="TIGR00198">
    <property type="entry name" value="cat_per_HPI"/>
    <property type="match status" value="1"/>
</dbReference>
<dbReference type="NCBIfam" id="NF011635">
    <property type="entry name" value="PRK15061.1"/>
    <property type="match status" value="1"/>
</dbReference>
<dbReference type="PANTHER" id="PTHR30555:SF0">
    <property type="entry name" value="CATALASE-PEROXIDASE"/>
    <property type="match status" value="1"/>
</dbReference>
<dbReference type="PANTHER" id="PTHR30555">
    <property type="entry name" value="HYDROPEROXIDASE I, BIFUNCTIONAL CATALASE-PEROXIDASE"/>
    <property type="match status" value="1"/>
</dbReference>
<dbReference type="Pfam" id="PF00141">
    <property type="entry name" value="peroxidase"/>
    <property type="match status" value="2"/>
</dbReference>
<dbReference type="PRINTS" id="PR00460">
    <property type="entry name" value="BPEROXIDASE"/>
</dbReference>
<dbReference type="PRINTS" id="PR00458">
    <property type="entry name" value="PEROXIDASE"/>
</dbReference>
<dbReference type="SUPFAM" id="SSF48113">
    <property type="entry name" value="Heme-dependent peroxidases"/>
    <property type="match status" value="2"/>
</dbReference>
<dbReference type="PROSITE" id="PS00435">
    <property type="entry name" value="PEROXIDASE_1"/>
    <property type="match status" value="1"/>
</dbReference>
<dbReference type="PROSITE" id="PS00436">
    <property type="entry name" value="PEROXIDASE_2"/>
    <property type="match status" value="1"/>
</dbReference>
<dbReference type="PROSITE" id="PS50873">
    <property type="entry name" value="PEROXIDASE_4"/>
    <property type="match status" value="1"/>
</dbReference>
<reference key="1">
    <citation type="journal article" date="2003" name="DNA Res.">
        <title>Complete genome structure of Gloeobacter violaceus PCC 7421, a cyanobacterium that lacks thylakoids.</title>
        <authorList>
            <person name="Nakamura Y."/>
            <person name="Kaneko T."/>
            <person name="Sato S."/>
            <person name="Mimuro M."/>
            <person name="Miyashita H."/>
            <person name="Tsuchiya T."/>
            <person name="Sasamoto S."/>
            <person name="Watanabe A."/>
            <person name="Kawashima K."/>
            <person name="Kishida Y."/>
            <person name="Kiyokawa C."/>
            <person name="Kohara M."/>
            <person name="Matsumoto M."/>
            <person name="Matsuno A."/>
            <person name="Nakazaki N."/>
            <person name="Shimpo S."/>
            <person name="Takeuchi C."/>
            <person name="Yamada M."/>
            <person name="Tabata S."/>
        </authorList>
    </citation>
    <scope>NUCLEOTIDE SEQUENCE [LARGE SCALE GENOMIC DNA]</scope>
    <source>
        <strain>ATCC 29082 / PCC 7421</strain>
    </source>
</reference>
<feature type="chain" id="PRO_0000354803" description="Catalase-peroxidase">
    <location>
        <begin position="1"/>
        <end position="735"/>
    </location>
</feature>
<feature type="region of interest" description="Disordered" evidence="2">
    <location>
        <begin position="342"/>
        <end position="362"/>
    </location>
</feature>
<feature type="active site" description="Proton acceptor" evidence="1">
    <location>
        <position position="98"/>
    </location>
</feature>
<feature type="binding site" description="axial binding residue" evidence="1">
    <location>
        <position position="261"/>
    </location>
    <ligand>
        <name>heme b</name>
        <dbReference type="ChEBI" id="CHEBI:60344"/>
    </ligand>
    <ligandPart>
        <name>Fe</name>
        <dbReference type="ChEBI" id="CHEBI:18248"/>
    </ligandPart>
</feature>
<feature type="site" description="Transition state stabilizer" evidence="1">
    <location>
        <position position="94"/>
    </location>
</feature>
<feature type="cross-link" description="Tryptophyl-tyrosyl-methioninium (Trp-Tyr) (with M-246)" evidence="1">
    <location>
        <begin position="97"/>
        <end position="220"/>
    </location>
</feature>
<feature type="cross-link" description="Tryptophyl-tyrosyl-methioninium (Tyr-Met) (with W-97)" evidence="1">
    <location>
        <begin position="220"/>
        <end position="246"/>
    </location>
</feature>
<protein>
    <recommendedName>
        <fullName evidence="1">Catalase-peroxidase</fullName>
        <shortName evidence="1">CP</shortName>
        <ecNumber evidence="1">1.11.1.21</ecNumber>
    </recommendedName>
    <alternativeName>
        <fullName evidence="1">Peroxidase/catalase</fullName>
    </alternativeName>
</protein>
<keyword id="KW-0349">Heme</keyword>
<keyword id="KW-0376">Hydrogen peroxide</keyword>
<keyword id="KW-0408">Iron</keyword>
<keyword id="KW-0479">Metal-binding</keyword>
<keyword id="KW-0560">Oxidoreductase</keyword>
<keyword id="KW-0575">Peroxidase</keyword>
<keyword id="KW-1185">Reference proteome</keyword>
<evidence type="ECO:0000255" key="1">
    <source>
        <dbReference type="HAMAP-Rule" id="MF_01961"/>
    </source>
</evidence>
<evidence type="ECO:0000256" key="2">
    <source>
        <dbReference type="SAM" id="MobiDB-lite"/>
    </source>
</evidence>
<proteinExistence type="inferred from homology"/>
<sequence length="735" mass="80389">MDVEAKCPMGGGKVEGRAVLFEMTNRLWWPNHLDLSVLHQNPPAGNPMGEGFNYAAEFESLDLAAVKQDIFALMTESQDWWPADYGHYGPLFIRMAWHAAGTYRIGDGRGGAGAGTQRFAPLNSWPDNANLDKARLLLWPIKEKYGRKLSWGDLLILAGNCALESMGFKTAGFAGGRVDIWEPENDIFWGPEREWLGDERYSSDRDLAHPLAAVQMGLIYVNPEGPNGKPDPMAAAHDIRETFGRMAMNDEETVALIAGGHTFGKCHGAAEPSQYVGAEPEGAGIERQGLGWDNSFGSGRGVHTITSGLEGAWTKNPIQWDNGYFENLFEYEWELTKSPAGAHQWTPKNPEAASTVPDAHDPHKRHAPMMATTDLAMRADPAYEKISRRFYDNPDQLAHAFAEAWYKLTHRDMGPYARLLGPEVPSEPRIWQDPVPASDHPLIDDADIAELKAQILAAGLSIARLVTTAWASASTFRGTDKRGGANGARIRLVPQKDWAVNEPTELATALAKLEAIQQDFNAGQTGGKQVSLADLIVLGGCAAVEQAAKKAGHDITVPFTPGRTDASPDQTDVESFAPLEPKIDGFRNYVGEKSVYSAEEMLVDRAHLLTLSAPEMTVLVGGLRVLGANYGGSKLGVFTERPETLTNDFFVNLLKTSTSMKWEASPDADVFEASDRATGEKKWAGTRVDLIFGSNSQLRALSEAYATADAQQTFVDAFVAAWTKVMNLDRFDLPR</sequence>
<accession>Q7NGW6</accession>
<comment type="function">
    <text evidence="1">Bifunctional enzyme with both catalase and broad-spectrum peroxidase activity.</text>
</comment>
<comment type="catalytic activity">
    <reaction evidence="1">
        <text>H2O2 + AH2 = A + 2 H2O</text>
        <dbReference type="Rhea" id="RHEA:30275"/>
        <dbReference type="ChEBI" id="CHEBI:13193"/>
        <dbReference type="ChEBI" id="CHEBI:15377"/>
        <dbReference type="ChEBI" id="CHEBI:16240"/>
        <dbReference type="ChEBI" id="CHEBI:17499"/>
        <dbReference type="EC" id="1.11.1.21"/>
    </reaction>
</comment>
<comment type="catalytic activity">
    <reaction evidence="1">
        <text>2 H2O2 = O2 + 2 H2O</text>
        <dbReference type="Rhea" id="RHEA:20309"/>
        <dbReference type="ChEBI" id="CHEBI:15377"/>
        <dbReference type="ChEBI" id="CHEBI:15379"/>
        <dbReference type="ChEBI" id="CHEBI:16240"/>
        <dbReference type="EC" id="1.11.1.21"/>
    </reaction>
</comment>
<comment type="cofactor">
    <cofactor evidence="1">
        <name>heme b</name>
        <dbReference type="ChEBI" id="CHEBI:60344"/>
    </cofactor>
    <text evidence="1">Binds 1 heme b (iron(II)-protoporphyrin IX) group per dimer.</text>
</comment>
<comment type="subunit">
    <text evidence="1">Homodimer or homotetramer.</text>
</comment>
<comment type="PTM">
    <text evidence="1">Formation of the three residue Trp-Tyr-Met cross-link is important for the catalase, but not the peroxidase activity of the enzyme.</text>
</comment>
<comment type="similarity">
    <text evidence="1">Belongs to the peroxidase family. Peroxidase/catalase subfamily.</text>
</comment>
<name>KATG_GLOVI</name>
<organism>
    <name type="scientific">Gloeobacter violaceus (strain ATCC 29082 / PCC 7421)</name>
    <dbReference type="NCBI Taxonomy" id="251221"/>
    <lineage>
        <taxon>Bacteria</taxon>
        <taxon>Bacillati</taxon>
        <taxon>Cyanobacteriota</taxon>
        <taxon>Cyanophyceae</taxon>
        <taxon>Gloeobacterales</taxon>
        <taxon>Gloeobacteraceae</taxon>
        <taxon>Gloeobacter</taxon>
    </lineage>
</organism>